<protein>
    <recommendedName>
        <fullName>HTH-type transcriptional regulator SAOUHSC_02897</fullName>
    </recommendedName>
</protein>
<dbReference type="EMBL" id="CP000253">
    <property type="protein sequence ID" value="ABD31893.1"/>
    <property type="molecule type" value="Genomic_DNA"/>
</dbReference>
<dbReference type="RefSeq" id="WP_001224188.1">
    <property type="nucleotide sequence ID" value="NZ_LS483365.1"/>
</dbReference>
<dbReference type="RefSeq" id="YP_501350.1">
    <property type="nucleotide sequence ID" value="NC_007795.1"/>
</dbReference>
<dbReference type="SMR" id="Q2FV42"/>
<dbReference type="STRING" id="93061.SAOUHSC_02897"/>
<dbReference type="PaxDb" id="1280-SAXN108_2827"/>
<dbReference type="GeneID" id="3921349"/>
<dbReference type="KEGG" id="sao:SAOUHSC_02897"/>
<dbReference type="PATRIC" id="fig|93061.5.peg.2618"/>
<dbReference type="eggNOG" id="COG1309">
    <property type="taxonomic scope" value="Bacteria"/>
</dbReference>
<dbReference type="HOGENOM" id="CLU_069356_17_2_9"/>
<dbReference type="OrthoDB" id="1679733at2"/>
<dbReference type="PRO" id="PR:Q2FV42"/>
<dbReference type="Proteomes" id="UP000008816">
    <property type="component" value="Chromosome"/>
</dbReference>
<dbReference type="GO" id="GO:0032993">
    <property type="term" value="C:protein-DNA complex"/>
    <property type="evidence" value="ECO:0000318"/>
    <property type="project" value="GO_Central"/>
</dbReference>
<dbReference type="GO" id="GO:0003677">
    <property type="term" value="F:DNA binding"/>
    <property type="evidence" value="ECO:0007669"/>
    <property type="project" value="UniProtKB-KW"/>
</dbReference>
<dbReference type="GO" id="GO:0003700">
    <property type="term" value="F:DNA-binding transcription factor activity"/>
    <property type="evidence" value="ECO:0000318"/>
    <property type="project" value="GO_Central"/>
</dbReference>
<dbReference type="Gene3D" id="1.10.357.10">
    <property type="entry name" value="Tetracycline Repressor, domain 2"/>
    <property type="match status" value="1"/>
</dbReference>
<dbReference type="InterPro" id="IPR023772">
    <property type="entry name" value="DNA-bd_HTH_TetR-type_CS"/>
</dbReference>
<dbReference type="InterPro" id="IPR009057">
    <property type="entry name" value="Homeodomain-like_sf"/>
</dbReference>
<dbReference type="InterPro" id="IPR050624">
    <property type="entry name" value="HTH-type_Tx_Regulator"/>
</dbReference>
<dbReference type="InterPro" id="IPR001647">
    <property type="entry name" value="HTH_TetR"/>
</dbReference>
<dbReference type="PANTHER" id="PTHR43479">
    <property type="entry name" value="ACREF/ENVCD OPERON REPRESSOR-RELATED"/>
    <property type="match status" value="1"/>
</dbReference>
<dbReference type="PANTHER" id="PTHR43479:SF11">
    <property type="entry name" value="ACREF_ENVCD OPERON REPRESSOR-RELATED"/>
    <property type="match status" value="1"/>
</dbReference>
<dbReference type="Pfam" id="PF00440">
    <property type="entry name" value="TetR_N"/>
    <property type="match status" value="1"/>
</dbReference>
<dbReference type="PRINTS" id="PR00455">
    <property type="entry name" value="HTHTETR"/>
</dbReference>
<dbReference type="SUPFAM" id="SSF46689">
    <property type="entry name" value="Homeodomain-like"/>
    <property type="match status" value="1"/>
</dbReference>
<dbReference type="PROSITE" id="PS01081">
    <property type="entry name" value="HTH_TETR_1"/>
    <property type="match status" value="1"/>
</dbReference>
<dbReference type="PROSITE" id="PS50977">
    <property type="entry name" value="HTH_TETR_2"/>
    <property type="match status" value="1"/>
</dbReference>
<reference key="1">
    <citation type="book" date="2006" name="Gram positive pathogens, 2nd edition">
        <title>The Staphylococcus aureus NCTC 8325 genome.</title>
        <editorList>
            <person name="Fischetti V."/>
            <person name="Novick R."/>
            <person name="Ferretti J."/>
            <person name="Portnoy D."/>
            <person name="Rood J."/>
        </editorList>
        <authorList>
            <person name="Gillaspy A.F."/>
            <person name="Worrell V."/>
            <person name="Orvis J."/>
            <person name="Roe B.A."/>
            <person name="Dyer D.W."/>
            <person name="Iandolo J.J."/>
        </authorList>
    </citation>
    <scope>NUCLEOTIDE SEQUENCE [LARGE SCALE GENOMIC DNA]</scope>
    <source>
        <strain>NCTC 8325 / PS 47</strain>
    </source>
</reference>
<keyword id="KW-0238">DNA-binding</keyword>
<keyword id="KW-1185">Reference proteome</keyword>
<keyword id="KW-0804">Transcription</keyword>
<keyword id="KW-0805">Transcription regulation</keyword>
<gene>
    <name type="ordered locus">SAOUHSC_02897</name>
</gene>
<name>Y2897_STAA8</name>
<proteinExistence type="predicted"/>
<accession>Q2FV42</accession>
<sequence>MRKDAKENRQRIEEIAHKLFDEEGVENISMNRIAKELGIGMGTLYRHFKDKSDLCYYVIQRDLDIFITHFKQIKDDYHSNYEVMQVSLDYLLQFKIDNKALLQCIEAGNNKLRFYQSAFYQELFDFYYDLFKSDDDTYTKFKTDMLLQSLSTSVFAFQIEHRHISIEAYRNYLLNIYLDEVGRND</sequence>
<feature type="chain" id="PRO_0000286696" description="HTH-type transcriptional regulator SAOUHSC_02897">
    <location>
        <begin position="1"/>
        <end position="185"/>
    </location>
</feature>
<feature type="domain" description="HTH tetR-type" evidence="1">
    <location>
        <begin position="6"/>
        <end position="66"/>
    </location>
</feature>
<feature type="DNA-binding region" description="H-T-H motif" evidence="1">
    <location>
        <begin position="29"/>
        <end position="48"/>
    </location>
</feature>
<evidence type="ECO:0000255" key="1">
    <source>
        <dbReference type="PROSITE-ProRule" id="PRU00335"/>
    </source>
</evidence>
<organism>
    <name type="scientific">Staphylococcus aureus (strain NCTC 8325 / PS 47)</name>
    <dbReference type="NCBI Taxonomy" id="93061"/>
    <lineage>
        <taxon>Bacteria</taxon>
        <taxon>Bacillati</taxon>
        <taxon>Bacillota</taxon>
        <taxon>Bacilli</taxon>
        <taxon>Bacillales</taxon>
        <taxon>Staphylococcaceae</taxon>
        <taxon>Staphylococcus</taxon>
    </lineage>
</organism>